<protein>
    <recommendedName>
        <fullName>Profilin</fullName>
    </recommendedName>
    <allergenName>Pru p 4.02</allergenName>
</protein>
<sequence>MSWQAYVDDHLMCEIEGNHLSAAAIIGHDGSVWAQSATFPQLKPEEVTGILNDFNEPGSLAPTGLYLGGTKYMVIQGEPGAVIRGKKGPGGVTVKKSTLALLIGIYDEPMTPGQCNMIVERLGDYLVEQGL</sequence>
<proteinExistence type="evidence at protein level"/>
<accession>Q8GT39</accession>
<feature type="initiator methionine" description="Removed" evidence="1">
    <location>
        <position position="1"/>
    </location>
</feature>
<feature type="chain" id="PRO_0000199669" description="Profilin">
    <location>
        <begin position="2"/>
        <end position="131"/>
    </location>
</feature>
<organism>
    <name type="scientific">Prunus persica</name>
    <name type="common">Peach</name>
    <name type="synonym">Amygdalus persica</name>
    <dbReference type="NCBI Taxonomy" id="3760"/>
    <lineage>
        <taxon>Eukaryota</taxon>
        <taxon>Viridiplantae</taxon>
        <taxon>Streptophyta</taxon>
        <taxon>Embryophyta</taxon>
        <taxon>Tracheophyta</taxon>
        <taxon>Spermatophyta</taxon>
        <taxon>Magnoliopsida</taxon>
        <taxon>eudicotyledons</taxon>
        <taxon>Gunneridae</taxon>
        <taxon>Pentapetalae</taxon>
        <taxon>rosids</taxon>
        <taxon>fabids</taxon>
        <taxon>Rosales</taxon>
        <taxon>Rosaceae</taxon>
        <taxon>Amygdaloideae</taxon>
        <taxon>Amygdaleae</taxon>
        <taxon>Prunus</taxon>
    </lineage>
</organism>
<evidence type="ECO:0000250" key="1"/>
<evidence type="ECO:0000305" key="2"/>
<keyword id="KW-0009">Actin-binding</keyword>
<keyword id="KW-0020">Allergen</keyword>
<keyword id="KW-0963">Cytoplasm</keyword>
<keyword id="KW-0206">Cytoskeleton</keyword>
<name>PROF_PRUPE</name>
<comment type="function">
    <text evidence="1">Binds to actin and affects the structure of the cytoskeleton. At high concentrations, profilin prevents the polymerization of actin, whereas it enhances it at low concentrations. By binding to PIP2, it inhibits the formation of IP3 and DG (By similarity).</text>
</comment>
<comment type="subunit">
    <text>Occurs in many kinds of cells as a complex with monomeric actin in a 1:1 ratio.</text>
</comment>
<comment type="subcellular location">
    <subcellularLocation>
        <location evidence="1">Cytoplasm</location>
        <location evidence="1">Cytoskeleton</location>
    </subcellularLocation>
</comment>
<comment type="allergen">
    <text>Causes an allergic reaction in human. Food allergen.</text>
</comment>
<comment type="similarity">
    <text evidence="2">Belongs to the profilin family.</text>
</comment>
<reference key="1">
    <citation type="journal article" date="2003" name="Allergy">
        <title>Peach profilin: cloning, heterologous expression and cross-reactivity with Bet v 2.</title>
        <authorList>
            <person name="Rodriguez-Perez R."/>
            <person name="Fernandez-Rivas M."/>
            <person name="Gonzalez-Mancebo E."/>
            <person name="Sanchez-Monge R."/>
            <person name="Diaz-Perales A."/>
            <person name="Salcedo G."/>
        </authorList>
    </citation>
    <scope>NUCLEOTIDE SEQUENCE [MRNA]</scope>
    <source>
        <tissue>Peelings</tissue>
    </source>
</reference>
<dbReference type="EMBL" id="AJ491882">
    <property type="protein sequence ID" value="CAD37202.1"/>
    <property type="molecule type" value="mRNA"/>
</dbReference>
<dbReference type="SMR" id="Q8GT39"/>
<dbReference type="Allergome" id="736">
    <property type="allergen name" value="Pru p 4"/>
</dbReference>
<dbReference type="Allergome" id="738">
    <property type="allergen name" value="Pru p 4.0201"/>
</dbReference>
<dbReference type="eggNOG" id="KOG1755">
    <property type="taxonomic scope" value="Eukaryota"/>
</dbReference>
<dbReference type="GO" id="GO:0005737">
    <property type="term" value="C:cytoplasm"/>
    <property type="evidence" value="ECO:0007669"/>
    <property type="project" value="UniProtKB-KW"/>
</dbReference>
<dbReference type="GO" id="GO:0005856">
    <property type="term" value="C:cytoskeleton"/>
    <property type="evidence" value="ECO:0007669"/>
    <property type="project" value="UniProtKB-SubCell"/>
</dbReference>
<dbReference type="GO" id="GO:0003779">
    <property type="term" value="F:actin binding"/>
    <property type="evidence" value="ECO:0007669"/>
    <property type="project" value="UniProtKB-KW"/>
</dbReference>
<dbReference type="CDD" id="cd00148">
    <property type="entry name" value="PROF"/>
    <property type="match status" value="1"/>
</dbReference>
<dbReference type="FunFam" id="3.30.450.30:FF:000001">
    <property type="entry name" value="Profilin"/>
    <property type="match status" value="1"/>
</dbReference>
<dbReference type="Gene3D" id="3.30.450.30">
    <property type="entry name" value="Dynein light chain 2a, cytoplasmic"/>
    <property type="match status" value="1"/>
</dbReference>
<dbReference type="InterPro" id="IPR048278">
    <property type="entry name" value="PFN"/>
</dbReference>
<dbReference type="InterPro" id="IPR005455">
    <property type="entry name" value="PFN_euk"/>
</dbReference>
<dbReference type="InterPro" id="IPR036140">
    <property type="entry name" value="PFN_sf"/>
</dbReference>
<dbReference type="InterPro" id="IPR027310">
    <property type="entry name" value="Profilin_CS"/>
</dbReference>
<dbReference type="PANTHER" id="PTHR11604">
    <property type="entry name" value="PROFILIN"/>
    <property type="match status" value="1"/>
</dbReference>
<dbReference type="PANTHER" id="PTHR11604:SF49">
    <property type="entry name" value="PROFILIN-2"/>
    <property type="match status" value="1"/>
</dbReference>
<dbReference type="Pfam" id="PF00235">
    <property type="entry name" value="Profilin"/>
    <property type="match status" value="1"/>
</dbReference>
<dbReference type="PRINTS" id="PR00392">
    <property type="entry name" value="PROFILIN"/>
</dbReference>
<dbReference type="PRINTS" id="PR01640">
    <property type="entry name" value="PROFILINPLNT"/>
</dbReference>
<dbReference type="SMART" id="SM00392">
    <property type="entry name" value="PROF"/>
    <property type="match status" value="1"/>
</dbReference>
<dbReference type="SUPFAM" id="SSF55770">
    <property type="entry name" value="Profilin (actin-binding protein)"/>
    <property type="match status" value="1"/>
</dbReference>
<dbReference type="PROSITE" id="PS00414">
    <property type="entry name" value="PROFILIN"/>
    <property type="match status" value="1"/>
</dbReference>